<gene>
    <name evidence="1" type="primary">astD</name>
    <name type="ordered locus">BURPS668_2724</name>
</gene>
<reference key="1">
    <citation type="journal article" date="2010" name="Genome Biol. Evol.">
        <title>Continuing evolution of Burkholderia mallei through genome reduction and large-scale rearrangements.</title>
        <authorList>
            <person name="Losada L."/>
            <person name="Ronning C.M."/>
            <person name="DeShazer D."/>
            <person name="Woods D."/>
            <person name="Fedorova N."/>
            <person name="Kim H.S."/>
            <person name="Shabalina S.A."/>
            <person name="Pearson T.R."/>
            <person name="Brinkac L."/>
            <person name="Tan P."/>
            <person name="Nandi T."/>
            <person name="Crabtree J."/>
            <person name="Badger J."/>
            <person name="Beckstrom-Sternberg S."/>
            <person name="Saqib M."/>
            <person name="Schutzer S.E."/>
            <person name="Keim P."/>
            <person name="Nierman W.C."/>
        </authorList>
    </citation>
    <scope>NUCLEOTIDE SEQUENCE [LARGE SCALE GENOMIC DNA]</scope>
    <source>
        <strain>668</strain>
    </source>
</reference>
<feature type="chain" id="PRO_1000065751" description="N-succinylglutamate 5-semialdehyde dehydrogenase">
    <location>
        <begin position="1"/>
        <end position="487"/>
    </location>
</feature>
<feature type="active site" evidence="1">
    <location>
        <position position="244"/>
    </location>
</feature>
<feature type="active site" evidence="1">
    <location>
        <position position="278"/>
    </location>
</feature>
<feature type="binding site" evidence="1">
    <location>
        <begin position="221"/>
        <end position="226"/>
    </location>
    <ligand>
        <name>NAD(+)</name>
        <dbReference type="ChEBI" id="CHEBI:57540"/>
    </ligand>
</feature>
<organism>
    <name type="scientific">Burkholderia pseudomallei (strain 668)</name>
    <dbReference type="NCBI Taxonomy" id="320373"/>
    <lineage>
        <taxon>Bacteria</taxon>
        <taxon>Pseudomonadati</taxon>
        <taxon>Pseudomonadota</taxon>
        <taxon>Betaproteobacteria</taxon>
        <taxon>Burkholderiales</taxon>
        <taxon>Burkholderiaceae</taxon>
        <taxon>Burkholderia</taxon>
        <taxon>pseudomallei group</taxon>
    </lineage>
</organism>
<sequence>MTELFIDGAWRDGAGPVFASRNPGTGEPVWEGAGASADDVERAVASARRAFAAWSALDLDARCAIVKRFAALLVERKEALATMIGRETGKPLWEARTEVASMAAKVDVSIAAYHERTGERRSPTADGVAVLRHRPHGVVAVFGPYNFPGHLPNGHIVPALIAGNTVVFKPSELAPGVARATVEIWRDAGLPAGVLNLVQGEKDTGVALANHRQIDGLFFTGSSDTGTLLHRQFGGRPEIVLALEMGGNNPLVVADVEDIDAAVHHAIQSAFLSAGQRCTCARRILVPRGAFGDRFLERFADVASRITADVYDADPQPFMGAVISARAASRLVAAQAKLLELGAAPIIEMRQRDPALGFVNASILDVTPVRELPDEEHFGPLAQIVRYTDLDDAIARANDTAFGLSAGLLADDETVWNTFRRTIRAGIVNWNRPTNGASSAAPFGGAGRSGNHRPSAYYAADYCAYPMASVESAQLQMPANLSPGLHF</sequence>
<comment type="function">
    <text evidence="1">Catalyzes the NAD-dependent reduction of succinylglutamate semialdehyde into succinylglutamate.</text>
</comment>
<comment type="catalytic activity">
    <reaction evidence="1">
        <text>N-succinyl-L-glutamate 5-semialdehyde + NAD(+) + H2O = N-succinyl-L-glutamate + NADH + 2 H(+)</text>
        <dbReference type="Rhea" id="RHEA:10812"/>
        <dbReference type="ChEBI" id="CHEBI:15377"/>
        <dbReference type="ChEBI" id="CHEBI:15378"/>
        <dbReference type="ChEBI" id="CHEBI:57540"/>
        <dbReference type="ChEBI" id="CHEBI:57945"/>
        <dbReference type="ChEBI" id="CHEBI:58520"/>
        <dbReference type="ChEBI" id="CHEBI:58763"/>
        <dbReference type="EC" id="1.2.1.71"/>
    </reaction>
</comment>
<comment type="pathway">
    <text evidence="1">Amino-acid degradation; L-arginine degradation via AST pathway; L-glutamate and succinate from L-arginine: step 4/5.</text>
</comment>
<comment type="similarity">
    <text evidence="1">Belongs to the aldehyde dehydrogenase family. AstD subfamily.</text>
</comment>
<evidence type="ECO:0000255" key="1">
    <source>
        <dbReference type="HAMAP-Rule" id="MF_01174"/>
    </source>
</evidence>
<protein>
    <recommendedName>
        <fullName evidence="1">N-succinylglutamate 5-semialdehyde dehydrogenase</fullName>
        <ecNumber evidence="1">1.2.1.71</ecNumber>
    </recommendedName>
    <alternativeName>
        <fullName evidence="1">Succinylglutamic semialdehyde dehydrogenase</fullName>
        <shortName evidence="1">SGSD</shortName>
    </alternativeName>
</protein>
<proteinExistence type="inferred from homology"/>
<accession>A3NBM7</accession>
<dbReference type="EC" id="1.2.1.71" evidence="1"/>
<dbReference type="EMBL" id="CP000570">
    <property type="protein sequence ID" value="ABN85067.1"/>
    <property type="molecule type" value="Genomic_DNA"/>
</dbReference>
<dbReference type="RefSeq" id="WP_004193383.1">
    <property type="nucleotide sequence ID" value="NC_009074.1"/>
</dbReference>
<dbReference type="SMR" id="A3NBM7"/>
<dbReference type="GeneID" id="92978363"/>
<dbReference type="KEGG" id="bpd:BURPS668_2724"/>
<dbReference type="HOGENOM" id="CLU_005391_1_0_4"/>
<dbReference type="UniPathway" id="UPA00185">
    <property type="reaction ID" value="UER00282"/>
</dbReference>
<dbReference type="GO" id="GO:0043824">
    <property type="term" value="F:succinylglutamate-semialdehyde dehydrogenase activity"/>
    <property type="evidence" value="ECO:0007669"/>
    <property type="project" value="UniProtKB-EC"/>
</dbReference>
<dbReference type="GO" id="GO:0019544">
    <property type="term" value="P:arginine catabolic process to glutamate"/>
    <property type="evidence" value="ECO:0007669"/>
    <property type="project" value="UniProtKB-UniRule"/>
</dbReference>
<dbReference type="GO" id="GO:0019545">
    <property type="term" value="P:arginine catabolic process to succinate"/>
    <property type="evidence" value="ECO:0007669"/>
    <property type="project" value="UniProtKB-UniRule"/>
</dbReference>
<dbReference type="CDD" id="cd07095">
    <property type="entry name" value="ALDH_SGSD_AstD"/>
    <property type="match status" value="1"/>
</dbReference>
<dbReference type="FunFam" id="3.40.605.10:FF:000010">
    <property type="entry name" value="N-succinylglutamate 5-semialdehyde dehydrogenase"/>
    <property type="match status" value="1"/>
</dbReference>
<dbReference type="Gene3D" id="3.40.605.10">
    <property type="entry name" value="Aldehyde Dehydrogenase, Chain A, domain 1"/>
    <property type="match status" value="1"/>
</dbReference>
<dbReference type="Gene3D" id="3.40.309.10">
    <property type="entry name" value="Aldehyde Dehydrogenase, Chain A, domain 2"/>
    <property type="match status" value="1"/>
</dbReference>
<dbReference type="HAMAP" id="MF_01174">
    <property type="entry name" value="Aldedh_AstD"/>
    <property type="match status" value="1"/>
</dbReference>
<dbReference type="InterPro" id="IPR016161">
    <property type="entry name" value="Ald_DH/histidinol_DH"/>
</dbReference>
<dbReference type="InterPro" id="IPR016163">
    <property type="entry name" value="Ald_DH_C"/>
</dbReference>
<dbReference type="InterPro" id="IPR016160">
    <property type="entry name" value="Ald_DH_CS_CYS"/>
</dbReference>
<dbReference type="InterPro" id="IPR029510">
    <property type="entry name" value="Ald_DH_CS_GLU"/>
</dbReference>
<dbReference type="InterPro" id="IPR016162">
    <property type="entry name" value="Ald_DH_N"/>
</dbReference>
<dbReference type="InterPro" id="IPR015590">
    <property type="entry name" value="Aldehyde_DH_dom"/>
</dbReference>
<dbReference type="InterPro" id="IPR017649">
    <property type="entry name" value="SuccinylGlu_semiald_DH_AstD"/>
</dbReference>
<dbReference type="NCBIfam" id="TIGR03240">
    <property type="entry name" value="arg_catab_astD"/>
    <property type="match status" value="1"/>
</dbReference>
<dbReference type="NCBIfam" id="NF006992">
    <property type="entry name" value="PRK09457.1"/>
    <property type="match status" value="1"/>
</dbReference>
<dbReference type="PANTHER" id="PTHR11699">
    <property type="entry name" value="ALDEHYDE DEHYDROGENASE-RELATED"/>
    <property type="match status" value="1"/>
</dbReference>
<dbReference type="Pfam" id="PF00171">
    <property type="entry name" value="Aldedh"/>
    <property type="match status" value="1"/>
</dbReference>
<dbReference type="SUPFAM" id="SSF53720">
    <property type="entry name" value="ALDH-like"/>
    <property type="match status" value="1"/>
</dbReference>
<dbReference type="PROSITE" id="PS00070">
    <property type="entry name" value="ALDEHYDE_DEHYDR_CYS"/>
    <property type="match status" value="1"/>
</dbReference>
<dbReference type="PROSITE" id="PS00687">
    <property type="entry name" value="ALDEHYDE_DEHYDR_GLU"/>
    <property type="match status" value="1"/>
</dbReference>
<keyword id="KW-0056">Arginine metabolism</keyword>
<keyword id="KW-0520">NAD</keyword>
<keyword id="KW-0560">Oxidoreductase</keyword>
<name>ASTD_BURP6</name>